<feature type="chain" id="PRO_0000186154" description="Troponin I, cardiac muscle">
    <location>
        <begin position="1"/>
        <end position="211"/>
    </location>
</feature>
<feature type="region of interest" description="Disordered" evidence="4">
    <location>
        <begin position="1"/>
        <end position="43"/>
    </location>
</feature>
<feature type="region of interest" description="Involved in binding TNC">
    <location>
        <begin position="32"/>
        <end position="79"/>
    </location>
</feature>
<feature type="region of interest" description="Involved in binding TNC and actin">
    <location>
        <begin position="129"/>
        <end position="150"/>
    </location>
</feature>
<feature type="site" description="Involved in TNI-TNT interactions">
    <location>
        <position position="80"/>
    </location>
</feature>
<feature type="site" description="Involved in TNI-TNT interactions">
    <location>
        <position position="97"/>
    </location>
</feature>
<feature type="modified residue" description="N-acetylalanine" evidence="5">
    <location>
        <position position="1"/>
    </location>
</feature>
<feature type="modified residue" description="Phosphoserine" evidence="2">
    <location>
        <position position="4"/>
    </location>
</feature>
<feature type="modified residue" description="Phosphoserine; by PHK, PKA and PKD/PRKD1" evidence="8 9">
    <location>
        <position position="22"/>
    </location>
</feature>
<feature type="modified residue" description="Phosphoserine; by PKA and PKD/PRKD1" evidence="8">
    <location>
        <position position="23"/>
    </location>
</feature>
<feature type="modified residue" description="Phosphotyrosine" evidence="2">
    <location>
        <position position="26"/>
    </location>
</feature>
<feature type="modified residue" description="Phosphothreonine; by STK4/MST1" evidence="2">
    <location>
        <position position="31"/>
    </location>
</feature>
<feature type="modified residue" description="Phosphoserine; by PKC/PRKCE" evidence="3">
    <location>
        <position position="42"/>
    </location>
</feature>
<feature type="modified residue" description="Phosphoserine; by PKC/PRKCE" evidence="3">
    <location>
        <position position="44"/>
    </location>
</feature>
<feature type="modified residue" description="Phosphothreonine; by STK4/MST1" evidence="2">
    <location>
        <position position="51"/>
    </location>
</feature>
<feature type="modified residue" description="Phosphoserine" evidence="2">
    <location>
        <position position="77"/>
    </location>
</feature>
<feature type="modified residue" description="Phosphothreonine" evidence="2">
    <location>
        <position position="78"/>
    </location>
</feature>
<feature type="modified residue" description="Phosphothreonine; by STK4/MST1" evidence="2">
    <location>
        <position position="129"/>
    </location>
</feature>
<feature type="modified residue" description="Phosphothreonine; by STK4/MST1" evidence="2">
    <location>
        <position position="143"/>
    </location>
</feature>
<feature type="modified residue" description="Phosphoserine; by PAK3" evidence="2">
    <location>
        <position position="151"/>
    </location>
</feature>
<feature type="modified residue" description="Phosphothreonine" evidence="2">
    <location>
        <position position="182"/>
    </location>
</feature>
<feature type="modified residue" description="Phosphoserine" evidence="2">
    <location>
        <position position="200"/>
    </location>
</feature>
<feature type="sequence conflict" description="In Ref. 1; AA sequence." evidence="7" ref="1">
    <location>
        <position position="17"/>
    </location>
</feature>
<feature type="sequence conflict" description="In Ref. 1; AA sequence." evidence="7" ref="1">
    <original>RSSANY</original>
    <variation>SD</variation>
    <location>
        <begin position="21"/>
        <end position="26"/>
    </location>
</feature>
<evidence type="ECO:0000250" key="1"/>
<evidence type="ECO:0000250" key="2">
    <source>
        <dbReference type="UniProtKB" id="P19429"/>
    </source>
</evidence>
<evidence type="ECO:0000250" key="3">
    <source>
        <dbReference type="UniProtKB" id="P48787"/>
    </source>
</evidence>
<evidence type="ECO:0000256" key="4">
    <source>
        <dbReference type="SAM" id="MobiDB-lite"/>
    </source>
</evidence>
<evidence type="ECO:0000269" key="5">
    <source>
    </source>
</evidence>
<evidence type="ECO:0000269" key="6">
    <source>
    </source>
</evidence>
<evidence type="ECO:0000305" key="7"/>
<evidence type="ECO:0000305" key="8">
    <source>
    </source>
</evidence>
<evidence type="ECO:0000305" key="9">
    <source>
    </source>
</evidence>
<keyword id="KW-0007">Acetylation</keyword>
<keyword id="KW-0009">Actin-binding</keyword>
<keyword id="KW-0903">Direct protein sequencing</keyword>
<keyword id="KW-0479">Metal-binding</keyword>
<keyword id="KW-0514">Muscle protein</keyword>
<keyword id="KW-0597">Phosphoprotein</keyword>
<keyword id="KW-1185">Reference proteome</keyword>
<organism>
    <name type="scientific">Oryctolagus cuniculus</name>
    <name type="common">Rabbit</name>
    <dbReference type="NCBI Taxonomy" id="9986"/>
    <lineage>
        <taxon>Eukaryota</taxon>
        <taxon>Metazoa</taxon>
        <taxon>Chordata</taxon>
        <taxon>Craniata</taxon>
        <taxon>Vertebrata</taxon>
        <taxon>Euteleostomi</taxon>
        <taxon>Mammalia</taxon>
        <taxon>Eutheria</taxon>
        <taxon>Euarchontoglires</taxon>
        <taxon>Glires</taxon>
        <taxon>Lagomorpha</taxon>
        <taxon>Leporidae</taxon>
        <taxon>Oryctolagus</taxon>
    </lineage>
</organism>
<accession>P02646</accession>
<reference key="1">
    <citation type="journal article" date="1976" name="Biochem. J.">
        <title>The amino acid sequence of rabbit cardiac troponin I.</title>
        <authorList>
            <person name="Grand R.J.A."/>
            <person name="Wilkinson J.M."/>
            <person name="Mole L.E."/>
        </authorList>
    </citation>
    <scope>PROTEIN SEQUENCE</scope>
</reference>
<reference key="2">
    <citation type="journal article" date="1977" name="Biochem. J.">
        <title>The amino acid sequence of rabbit slow-muscle troponin I.</title>
        <authorList>
            <person name="Grand R.J.A."/>
            <person name="Wilkinson J.M."/>
        </authorList>
    </citation>
    <scope>SEQUENCE REVISION</scope>
</reference>
<reference key="3">
    <citation type="journal article" date="1990" name="FEBS Lett.">
        <title>A common motif of two adjacent phosphoserines in bovine, rabbit and human cardiac troponin I.</title>
        <authorList>
            <person name="Mittmann K."/>
            <person name="Jaquet K."/>
            <person name="Heilmeyer L.M.G. Jr."/>
        </authorList>
    </citation>
    <scope>PROTEIN SEQUENCE OF 6-36</scope>
    <scope>ACETYLATION AT ALA-1</scope>
    <scope>PHOSPHORYLATION AT SER-22 AND SER-23</scope>
    <source>
        <tissue>Heart</tissue>
    </source>
</reference>
<reference key="4">
    <citation type="journal article" date="1976" name="Nature">
        <title>Phosphorylation of troponin I and the inotropic effect of adrenaline in the perfused rabbit heart.</title>
        <authorList>
            <person name="Solaro R.J."/>
            <person name="Moir A.J.G."/>
            <person name="Perry S.V."/>
        </authorList>
    </citation>
    <scope>PHOSPHORYLATION AT SER-22</scope>
</reference>
<protein>
    <recommendedName>
        <fullName>Troponin I, cardiac muscle</fullName>
    </recommendedName>
    <alternativeName>
        <fullName>Cardiac troponin I</fullName>
    </alternativeName>
</protein>
<proteinExistence type="evidence at protein level"/>
<comment type="function">
    <text>Troponin I is the inhibitory subunit of troponin, the thin filament regulatory complex which confers calcium-sensitivity to striated muscle actomyosin ATPase activity.</text>
</comment>
<comment type="subunit">
    <text evidence="1">Interacts with TRIM63 (By similarity). Binds to actin and tropomyosin. Interacts with STK4/MST1 (By similarity).</text>
</comment>
<comment type="interaction">
    <interactant intactId="EBI-8614386">
        <id>P02646</id>
    </interactant>
    <interactant intactId="EBI-1042651">
        <id>Q96RG2</id>
        <label>PASK</label>
    </interactant>
    <organismsDiffer>true</organismsDiffer>
    <experiments>2</experiments>
</comment>
<comment type="PTM">
    <text evidence="1 5 6">Phosphorylated at Ser-22 and Ser-23 by PRKD1; phosphorylation reduces myofilament calcium sensitivity. Phosphorylated preferentially at Thr-31. Phosphorylation by STK4/MST1 alters its binding affinity to TNNC1 (cardiac Tn-C) and TNNT2 (cardiac Tn-T). Phosphorylated at Ser-42 and Ser-44 by PRKCE; phosphorylation increases myocardium contractile dysfunction (By similarity). Ser-22 is one of three sites in the region of residues 1-48 that are phosphorylated by phosphorylase kinase.</text>
</comment>
<comment type="similarity">
    <text evidence="7">Belongs to the troponin I family.</text>
</comment>
<gene>
    <name type="primary">TNNI3</name>
</gene>
<sequence length="211" mass="24123">ADESRDAAGEARPAPAPVRRRSSANYRAYATEPHAKSKKKISASRKLQLKTLMLQIAKQELEREAEERRGEKGRALSTRCQPLELAGLGFAELQDLCRQLHARVDKVDEERYDVEAKVTKNITEIADLTQKIFDLRGKFKRPTLRLRVRISADAMMQALLGTRAKETLDLRAHLKQVKKEDTEKENREVGDWRKNIDLLSGMEGRKKKFEG</sequence>
<name>TNNI3_RABIT</name>
<dbReference type="PIR" id="A90296">
    <property type="entry name" value="TPRBIC"/>
</dbReference>
<dbReference type="SMR" id="P02646"/>
<dbReference type="FunCoup" id="P02646">
    <property type="interactions" value="33"/>
</dbReference>
<dbReference type="IntAct" id="P02646">
    <property type="interactions" value="1"/>
</dbReference>
<dbReference type="MINT" id="P02646"/>
<dbReference type="iPTMnet" id="P02646"/>
<dbReference type="InParanoid" id="P02646"/>
<dbReference type="Proteomes" id="UP000001811">
    <property type="component" value="Unplaced"/>
</dbReference>
<dbReference type="GO" id="GO:0005861">
    <property type="term" value="C:troponin complex"/>
    <property type="evidence" value="ECO:0007669"/>
    <property type="project" value="InterPro"/>
</dbReference>
<dbReference type="GO" id="GO:0003779">
    <property type="term" value="F:actin binding"/>
    <property type="evidence" value="ECO:0007669"/>
    <property type="project" value="UniProtKB-KW"/>
</dbReference>
<dbReference type="GO" id="GO:0046872">
    <property type="term" value="F:metal ion binding"/>
    <property type="evidence" value="ECO:0007669"/>
    <property type="project" value="UniProtKB-KW"/>
</dbReference>
<dbReference type="GO" id="GO:0060048">
    <property type="term" value="P:cardiac muscle contraction"/>
    <property type="evidence" value="ECO:0007669"/>
    <property type="project" value="TreeGrafter"/>
</dbReference>
<dbReference type="GO" id="GO:0003009">
    <property type="term" value="P:skeletal muscle contraction"/>
    <property type="evidence" value="ECO:0007669"/>
    <property type="project" value="TreeGrafter"/>
</dbReference>
<dbReference type="FunFam" id="1.20.5.350:FF:000002">
    <property type="entry name" value="troponin I, fast skeletal muscle"/>
    <property type="match status" value="1"/>
</dbReference>
<dbReference type="Gene3D" id="1.20.5.350">
    <property type="match status" value="1"/>
</dbReference>
<dbReference type="Gene3D" id="6.10.250.180">
    <property type="match status" value="1"/>
</dbReference>
<dbReference type="InterPro" id="IPR001978">
    <property type="entry name" value="Troponin"/>
</dbReference>
<dbReference type="InterPro" id="IPR021666">
    <property type="entry name" value="Troponin-I_N"/>
</dbReference>
<dbReference type="InterPro" id="IPR050875">
    <property type="entry name" value="Troponin_I"/>
</dbReference>
<dbReference type="InterPro" id="IPR038077">
    <property type="entry name" value="Troponin_sf"/>
</dbReference>
<dbReference type="PANTHER" id="PTHR13738">
    <property type="entry name" value="TROPONIN I"/>
    <property type="match status" value="1"/>
</dbReference>
<dbReference type="PANTHER" id="PTHR13738:SF2">
    <property type="entry name" value="TROPONIN I, CARDIAC MUSCLE"/>
    <property type="match status" value="1"/>
</dbReference>
<dbReference type="Pfam" id="PF00992">
    <property type="entry name" value="Troponin"/>
    <property type="match status" value="1"/>
</dbReference>
<dbReference type="Pfam" id="PF11636">
    <property type="entry name" value="Troponin-I_N"/>
    <property type="match status" value="1"/>
</dbReference>
<dbReference type="SUPFAM" id="SSF90250">
    <property type="entry name" value="Troponin coil-coiled subunits"/>
    <property type="match status" value="1"/>
</dbReference>